<accession>A7FFK5</accession>
<sequence length="251" mass="27848">MNLISIPAFQDNYIWLLANRQKHCVIVDPGESAPVLATLAQGQYVPQAILLTHHHNDHVGGVADLRHHFPDIPVYGPQETAKKGATVIVNDGDSLTIAGQNYTIIAVPGHTLGHIAYYSSPYLFCGDTLFSAGCGRLLEGTPEQMYASIQRLAQLPDETLICCAHEYTLSNLKFAHAILPADQDIATYQQQIEQLRSKNLPSLPVKLQFERKINVFLRCNDIDLQRKIGITSPPDSLVSVFCELRSRKDSF</sequence>
<keyword id="KW-0378">Hydrolase</keyword>
<keyword id="KW-0479">Metal-binding</keyword>
<keyword id="KW-0862">Zinc</keyword>
<protein>
    <recommendedName>
        <fullName evidence="1">Hydroxyacylglutathione hydrolase</fullName>
        <ecNumber evidence="1">3.1.2.6</ecNumber>
    </recommendedName>
    <alternativeName>
        <fullName evidence="1">Glyoxalase II</fullName>
        <shortName evidence="1">Glx II</shortName>
    </alternativeName>
</protein>
<proteinExistence type="inferred from homology"/>
<feature type="chain" id="PRO_1000068236" description="Hydroxyacylglutathione hydrolase">
    <location>
        <begin position="1"/>
        <end position="251"/>
    </location>
</feature>
<feature type="binding site" evidence="1">
    <location>
        <position position="53"/>
    </location>
    <ligand>
        <name>Zn(2+)</name>
        <dbReference type="ChEBI" id="CHEBI:29105"/>
        <label>1</label>
    </ligand>
</feature>
<feature type="binding site" evidence="1">
    <location>
        <position position="55"/>
    </location>
    <ligand>
        <name>Zn(2+)</name>
        <dbReference type="ChEBI" id="CHEBI:29105"/>
        <label>1</label>
    </ligand>
</feature>
<feature type="binding site" evidence="1">
    <location>
        <position position="57"/>
    </location>
    <ligand>
        <name>Zn(2+)</name>
        <dbReference type="ChEBI" id="CHEBI:29105"/>
        <label>2</label>
    </ligand>
</feature>
<feature type="binding site" evidence="1">
    <location>
        <position position="58"/>
    </location>
    <ligand>
        <name>Zn(2+)</name>
        <dbReference type="ChEBI" id="CHEBI:29105"/>
        <label>2</label>
    </ligand>
</feature>
<feature type="binding site" evidence="1">
    <location>
        <position position="110"/>
    </location>
    <ligand>
        <name>Zn(2+)</name>
        <dbReference type="ChEBI" id="CHEBI:29105"/>
        <label>1</label>
    </ligand>
</feature>
<feature type="binding site" evidence="1">
    <location>
        <position position="127"/>
    </location>
    <ligand>
        <name>Zn(2+)</name>
        <dbReference type="ChEBI" id="CHEBI:29105"/>
        <label>1</label>
    </ligand>
</feature>
<feature type="binding site" evidence="1">
    <location>
        <position position="127"/>
    </location>
    <ligand>
        <name>Zn(2+)</name>
        <dbReference type="ChEBI" id="CHEBI:29105"/>
        <label>2</label>
    </ligand>
</feature>
<feature type="binding site" evidence="1">
    <location>
        <position position="165"/>
    </location>
    <ligand>
        <name>Zn(2+)</name>
        <dbReference type="ChEBI" id="CHEBI:29105"/>
        <label>2</label>
    </ligand>
</feature>
<comment type="function">
    <text evidence="1">Thiolesterase that catalyzes the hydrolysis of S-D-lactoyl-glutathione to form glutathione and D-lactic acid.</text>
</comment>
<comment type="catalytic activity">
    <reaction evidence="1">
        <text>an S-(2-hydroxyacyl)glutathione + H2O = a 2-hydroxy carboxylate + glutathione + H(+)</text>
        <dbReference type="Rhea" id="RHEA:21864"/>
        <dbReference type="ChEBI" id="CHEBI:15377"/>
        <dbReference type="ChEBI" id="CHEBI:15378"/>
        <dbReference type="ChEBI" id="CHEBI:57925"/>
        <dbReference type="ChEBI" id="CHEBI:58896"/>
        <dbReference type="ChEBI" id="CHEBI:71261"/>
        <dbReference type="EC" id="3.1.2.6"/>
    </reaction>
</comment>
<comment type="cofactor">
    <cofactor evidence="1">
        <name>Zn(2+)</name>
        <dbReference type="ChEBI" id="CHEBI:29105"/>
    </cofactor>
    <text evidence="1">Binds 2 Zn(2+) ions per subunit.</text>
</comment>
<comment type="pathway">
    <text evidence="1">Secondary metabolite metabolism; methylglyoxal degradation; (R)-lactate from methylglyoxal: step 2/2.</text>
</comment>
<comment type="subunit">
    <text evidence="1">Monomer.</text>
</comment>
<comment type="similarity">
    <text evidence="1">Belongs to the metallo-beta-lactamase superfamily. Glyoxalase II family.</text>
</comment>
<dbReference type="EC" id="3.1.2.6" evidence="1"/>
<dbReference type="EMBL" id="CP000720">
    <property type="protein sequence ID" value="ABS46432.1"/>
    <property type="molecule type" value="Genomic_DNA"/>
</dbReference>
<dbReference type="RefSeq" id="WP_011192852.1">
    <property type="nucleotide sequence ID" value="NC_009708.1"/>
</dbReference>
<dbReference type="SMR" id="A7FFK5"/>
<dbReference type="GeneID" id="49785020"/>
<dbReference type="KEGG" id="ypi:YpsIP31758_1052"/>
<dbReference type="HOGENOM" id="CLU_030571_4_1_6"/>
<dbReference type="UniPathway" id="UPA00619">
    <property type="reaction ID" value="UER00676"/>
</dbReference>
<dbReference type="Proteomes" id="UP000002412">
    <property type="component" value="Chromosome"/>
</dbReference>
<dbReference type="GO" id="GO:0004416">
    <property type="term" value="F:hydroxyacylglutathione hydrolase activity"/>
    <property type="evidence" value="ECO:0007669"/>
    <property type="project" value="UniProtKB-UniRule"/>
</dbReference>
<dbReference type="GO" id="GO:0046872">
    <property type="term" value="F:metal ion binding"/>
    <property type="evidence" value="ECO:0007669"/>
    <property type="project" value="UniProtKB-KW"/>
</dbReference>
<dbReference type="GO" id="GO:0019243">
    <property type="term" value="P:methylglyoxal catabolic process to D-lactate via S-lactoyl-glutathione"/>
    <property type="evidence" value="ECO:0007669"/>
    <property type="project" value="InterPro"/>
</dbReference>
<dbReference type="CDD" id="cd07723">
    <property type="entry name" value="hydroxyacylglutathione_hydrolase_MBL-fold"/>
    <property type="match status" value="1"/>
</dbReference>
<dbReference type="Gene3D" id="3.60.15.10">
    <property type="entry name" value="Ribonuclease Z/Hydroxyacylglutathione hydrolase-like"/>
    <property type="match status" value="1"/>
</dbReference>
<dbReference type="HAMAP" id="MF_01374">
    <property type="entry name" value="Glyoxalase_2"/>
    <property type="match status" value="1"/>
</dbReference>
<dbReference type="InterPro" id="IPR035680">
    <property type="entry name" value="Clx_II_MBL"/>
</dbReference>
<dbReference type="InterPro" id="IPR050110">
    <property type="entry name" value="Glyoxalase_II_hydrolase"/>
</dbReference>
<dbReference type="InterPro" id="IPR032282">
    <property type="entry name" value="HAGH_C"/>
</dbReference>
<dbReference type="InterPro" id="IPR017782">
    <property type="entry name" value="Hydroxyacylglutathione_Hdrlase"/>
</dbReference>
<dbReference type="InterPro" id="IPR001279">
    <property type="entry name" value="Metallo-B-lactamas"/>
</dbReference>
<dbReference type="InterPro" id="IPR036866">
    <property type="entry name" value="RibonucZ/Hydroxyglut_hydro"/>
</dbReference>
<dbReference type="NCBIfam" id="TIGR03413">
    <property type="entry name" value="GSH_gloB"/>
    <property type="match status" value="1"/>
</dbReference>
<dbReference type="PANTHER" id="PTHR43705">
    <property type="entry name" value="HYDROXYACYLGLUTATHIONE HYDROLASE"/>
    <property type="match status" value="1"/>
</dbReference>
<dbReference type="PANTHER" id="PTHR43705:SF1">
    <property type="entry name" value="HYDROXYACYLGLUTATHIONE HYDROLASE GLOB"/>
    <property type="match status" value="1"/>
</dbReference>
<dbReference type="Pfam" id="PF16123">
    <property type="entry name" value="HAGH_C"/>
    <property type="match status" value="1"/>
</dbReference>
<dbReference type="Pfam" id="PF00753">
    <property type="entry name" value="Lactamase_B"/>
    <property type="match status" value="1"/>
</dbReference>
<dbReference type="PIRSF" id="PIRSF005457">
    <property type="entry name" value="Glx"/>
    <property type="match status" value="1"/>
</dbReference>
<dbReference type="SMART" id="SM00849">
    <property type="entry name" value="Lactamase_B"/>
    <property type="match status" value="1"/>
</dbReference>
<dbReference type="SUPFAM" id="SSF56281">
    <property type="entry name" value="Metallo-hydrolase/oxidoreductase"/>
    <property type="match status" value="1"/>
</dbReference>
<reference key="1">
    <citation type="journal article" date="2007" name="PLoS Genet.">
        <title>The complete genome sequence of Yersinia pseudotuberculosis IP31758, the causative agent of Far East scarlet-like fever.</title>
        <authorList>
            <person name="Eppinger M."/>
            <person name="Rosovitz M.J."/>
            <person name="Fricke W.F."/>
            <person name="Rasko D.A."/>
            <person name="Kokorina G."/>
            <person name="Fayolle C."/>
            <person name="Lindler L.E."/>
            <person name="Carniel E."/>
            <person name="Ravel J."/>
        </authorList>
    </citation>
    <scope>NUCLEOTIDE SEQUENCE [LARGE SCALE GENOMIC DNA]</scope>
    <source>
        <strain>IP 31758</strain>
    </source>
</reference>
<name>GLO2_YERP3</name>
<gene>
    <name evidence="1" type="primary">gloB</name>
    <name type="ordered locus">YpsIP31758_1052</name>
</gene>
<evidence type="ECO:0000255" key="1">
    <source>
        <dbReference type="HAMAP-Rule" id="MF_01374"/>
    </source>
</evidence>
<organism>
    <name type="scientific">Yersinia pseudotuberculosis serotype O:1b (strain IP 31758)</name>
    <dbReference type="NCBI Taxonomy" id="349747"/>
    <lineage>
        <taxon>Bacteria</taxon>
        <taxon>Pseudomonadati</taxon>
        <taxon>Pseudomonadota</taxon>
        <taxon>Gammaproteobacteria</taxon>
        <taxon>Enterobacterales</taxon>
        <taxon>Yersiniaceae</taxon>
        <taxon>Yersinia</taxon>
    </lineage>
</organism>